<accession>Q23525</accession>
<keyword id="KW-0539">Nucleus</keyword>
<keyword id="KW-1185">Reference proteome</keyword>
<gene>
    <name evidence="4" type="primary">gldi-11</name>
    <name evidence="4" type="ORF">ZK546.14</name>
</gene>
<dbReference type="EMBL" id="FO081669">
    <property type="protein sequence ID" value="CCD73224.1"/>
    <property type="molecule type" value="Genomic_DNA"/>
</dbReference>
<dbReference type="PIR" id="T27903">
    <property type="entry name" value="T27903"/>
</dbReference>
<dbReference type="RefSeq" id="NP_494907.1">
    <property type="nucleotide sequence ID" value="NM_062506.6"/>
</dbReference>
<dbReference type="SMR" id="Q23525"/>
<dbReference type="BioGRID" id="39207">
    <property type="interactions" value="8"/>
</dbReference>
<dbReference type="FunCoup" id="Q23525">
    <property type="interactions" value="155"/>
</dbReference>
<dbReference type="STRING" id="6239.ZK546.14a.2"/>
<dbReference type="PaxDb" id="6239-ZK546.14a"/>
<dbReference type="PeptideAtlas" id="Q23525"/>
<dbReference type="EnsemblMetazoa" id="ZK546.14a.1">
    <property type="protein sequence ID" value="ZK546.14a.1"/>
    <property type="gene ID" value="WBGene00022765"/>
</dbReference>
<dbReference type="GeneID" id="173854"/>
<dbReference type="KEGG" id="cel:CELE_ZK546.14"/>
<dbReference type="UCSC" id="ZK546.14a.1">
    <property type="organism name" value="c. elegans"/>
</dbReference>
<dbReference type="AGR" id="WB:WBGene00022765"/>
<dbReference type="CTD" id="173854"/>
<dbReference type="WormBase" id="ZK546.14a">
    <property type="protein sequence ID" value="CE02914"/>
    <property type="gene ID" value="WBGene00022765"/>
    <property type="gene designation" value="gldi-11"/>
</dbReference>
<dbReference type="eggNOG" id="KOG2885">
    <property type="taxonomic scope" value="Eukaryota"/>
</dbReference>
<dbReference type="GeneTree" id="ENSGT00390000006980"/>
<dbReference type="InParanoid" id="Q23525"/>
<dbReference type="OMA" id="ITSTQWQ"/>
<dbReference type="OrthoDB" id="444809at2759"/>
<dbReference type="PRO" id="PR:Q23525"/>
<dbReference type="Proteomes" id="UP000001940">
    <property type="component" value="Chromosome II"/>
</dbReference>
<dbReference type="Bgee" id="WBGene00022765">
    <property type="expression patterns" value="Expressed in adult organism and 4 other cell types or tissues"/>
</dbReference>
<dbReference type="ExpressionAtlas" id="Q23525">
    <property type="expression patterns" value="baseline and differential"/>
</dbReference>
<dbReference type="GO" id="GO:0005730">
    <property type="term" value="C:nucleolus"/>
    <property type="evidence" value="ECO:0000318"/>
    <property type="project" value="GO_Central"/>
</dbReference>
<dbReference type="GO" id="GO:0005654">
    <property type="term" value="C:nucleoplasm"/>
    <property type="evidence" value="ECO:0007669"/>
    <property type="project" value="UniProtKB-SubCell"/>
</dbReference>
<dbReference type="GO" id="GO:0003677">
    <property type="term" value="F:DNA binding"/>
    <property type="evidence" value="ECO:0000318"/>
    <property type="project" value="GO_Central"/>
</dbReference>
<dbReference type="GO" id="GO:0003723">
    <property type="term" value="F:RNA binding"/>
    <property type="evidence" value="ECO:0000318"/>
    <property type="project" value="GO_Central"/>
</dbReference>
<dbReference type="GO" id="GO:0042273">
    <property type="term" value="P:ribosomal large subunit biogenesis"/>
    <property type="evidence" value="ECO:0000318"/>
    <property type="project" value="GO_Central"/>
</dbReference>
<dbReference type="GO" id="GO:0042274">
    <property type="term" value="P:ribosomal small subunit biogenesis"/>
    <property type="evidence" value="ECO:0000318"/>
    <property type="project" value="GO_Central"/>
</dbReference>
<dbReference type="InterPro" id="IPR029190">
    <property type="entry name" value="Rrp14/SURF6_C"/>
</dbReference>
<dbReference type="InterPro" id="IPR007019">
    <property type="entry name" value="SURF6"/>
</dbReference>
<dbReference type="PANTHER" id="PTHR14369">
    <property type="entry name" value="SURFEIT LOCUS PROTEIN 6"/>
    <property type="match status" value="1"/>
</dbReference>
<dbReference type="PANTHER" id="PTHR14369:SF0">
    <property type="entry name" value="SURFEIT LOCUS PROTEIN 6"/>
    <property type="match status" value="1"/>
</dbReference>
<dbReference type="Pfam" id="PF04935">
    <property type="entry name" value="SURF6"/>
    <property type="match status" value="1"/>
</dbReference>
<protein>
    <recommendedName>
        <fullName evidence="3">SURF6 homolog gldi-11</fullName>
    </recommendedName>
    <alternativeName>
        <fullName evidence="4">Germ layers disorganized gldi-11</fullName>
    </alternativeName>
</protein>
<reference key="1">
    <citation type="journal article" date="1998" name="Science">
        <title>Genome sequence of the nematode C. elegans: a platform for investigating biology.</title>
        <authorList>
            <consortium name="The C. elegans sequencing consortium"/>
        </authorList>
    </citation>
    <scope>NUCLEOTIDE SEQUENCE [LARGE SCALE GENOMIC DNA]</scope>
    <source>
        <strain>Bristol N2</strain>
    </source>
</reference>
<evidence type="ECO:0000250" key="1">
    <source>
        <dbReference type="UniProtKB" id="P70279"/>
    </source>
</evidence>
<evidence type="ECO:0000256" key="2">
    <source>
        <dbReference type="SAM" id="MobiDB-lite"/>
    </source>
</evidence>
<evidence type="ECO:0000305" key="3"/>
<evidence type="ECO:0000312" key="4">
    <source>
        <dbReference type="WormBase" id="ZK546.14a"/>
    </source>
</evidence>
<sequence length="472" mass="54262">MAETLEAVEDAVDILEKEMLSFCNLIPVNSWGFDDDVKESLKMRKHSLVNRQLSKKERKSMSAQQKQHLAKGLGLVPNTVQEVLEWMSKSKQHSKVQPQKVVAPVKRPADQNKNKEKVVKKDQKKQDKKADSDSEEDDSSDDEEKEETDEPVAKKQKKEESSDDDEDSEDGEEPEGNNGAVEAEDSDSTDEEEETPSKPNKTVAQSTLKSNGKIDKEIQKLEDDEDNESPEIRRQIALLRLQKKLKEMKVERKGKGPAKVTSAMAEKMAEEKRLKRRESKLKLKQRRAEEKKGKEAAAQVKKETVESTENGNEPVEKQKSGISFNNLKFEIKEDKQRGKKQRTAKKDRALKLTGRDYKSLIAKVEETKATIAKVREADPHKATIMEDELKWEKTLKRAAGGKVKDNLGMLKKALVKKNKMKDRRKQKWENRENKTEGEKQTKQDKRKKNLQKRIDDVKKRKMNKLRNKGRIL</sequence>
<name>SURF6_CAEEL</name>
<comment type="function">
    <text evidence="1">Binds to both DNA and RNA in vitro, with a stronger binding capacity for RNA. May represent a nucleolar constitutive protein involved in ribosomal biosynthesis or assembly.</text>
</comment>
<comment type="subcellular location">
    <subcellularLocation>
        <location evidence="1">Nucleus</location>
        <location evidence="1">Nucleoplasm</location>
    </subcellularLocation>
    <text evidence="1">Granular component of the nucleolus.</text>
</comment>
<comment type="similarity">
    <text evidence="3">Belongs to the SURF6 family.</text>
</comment>
<feature type="chain" id="PRO_0000220974" description="SURF6 homolog gldi-11">
    <location>
        <begin position="1"/>
        <end position="472"/>
    </location>
</feature>
<feature type="region of interest" description="Disordered" evidence="2">
    <location>
        <begin position="53"/>
        <end position="73"/>
    </location>
</feature>
<feature type="region of interest" description="Disordered" evidence="2">
    <location>
        <begin position="89"/>
        <end position="232"/>
    </location>
</feature>
<feature type="region of interest" description="Disordered" evidence="2">
    <location>
        <begin position="249"/>
        <end position="350"/>
    </location>
</feature>
<feature type="region of interest" description="Disordered" evidence="2">
    <location>
        <begin position="414"/>
        <end position="472"/>
    </location>
</feature>
<feature type="compositionally biased region" description="Low complexity" evidence="2">
    <location>
        <begin position="95"/>
        <end position="106"/>
    </location>
</feature>
<feature type="compositionally biased region" description="Basic and acidic residues" evidence="2">
    <location>
        <begin position="107"/>
        <end position="132"/>
    </location>
</feature>
<feature type="compositionally biased region" description="Acidic residues" evidence="2">
    <location>
        <begin position="133"/>
        <end position="150"/>
    </location>
</feature>
<feature type="compositionally biased region" description="Basic and acidic residues" evidence="2">
    <location>
        <begin position="151"/>
        <end position="160"/>
    </location>
</feature>
<feature type="compositionally biased region" description="Acidic residues" evidence="2">
    <location>
        <begin position="161"/>
        <end position="175"/>
    </location>
</feature>
<feature type="compositionally biased region" description="Acidic residues" evidence="2">
    <location>
        <begin position="182"/>
        <end position="194"/>
    </location>
</feature>
<feature type="compositionally biased region" description="Polar residues" evidence="2">
    <location>
        <begin position="197"/>
        <end position="210"/>
    </location>
</feature>
<feature type="compositionally biased region" description="Basic and acidic residues" evidence="2">
    <location>
        <begin position="212"/>
        <end position="221"/>
    </location>
</feature>
<feature type="compositionally biased region" description="Basic residues" evidence="2">
    <location>
        <begin position="274"/>
        <end position="285"/>
    </location>
</feature>
<feature type="compositionally biased region" description="Basic and acidic residues" evidence="2">
    <location>
        <begin position="286"/>
        <end position="305"/>
    </location>
</feature>
<feature type="compositionally biased region" description="Basic residues" evidence="2">
    <location>
        <begin position="414"/>
        <end position="426"/>
    </location>
</feature>
<feature type="compositionally biased region" description="Basic and acidic residues" evidence="2">
    <location>
        <begin position="427"/>
        <end position="443"/>
    </location>
</feature>
<feature type="compositionally biased region" description="Basic residues" evidence="2">
    <location>
        <begin position="459"/>
        <end position="472"/>
    </location>
</feature>
<organism>
    <name type="scientific">Caenorhabditis elegans</name>
    <dbReference type="NCBI Taxonomy" id="6239"/>
    <lineage>
        <taxon>Eukaryota</taxon>
        <taxon>Metazoa</taxon>
        <taxon>Ecdysozoa</taxon>
        <taxon>Nematoda</taxon>
        <taxon>Chromadorea</taxon>
        <taxon>Rhabditida</taxon>
        <taxon>Rhabditina</taxon>
        <taxon>Rhabditomorpha</taxon>
        <taxon>Rhabditoidea</taxon>
        <taxon>Rhabditidae</taxon>
        <taxon>Peloderinae</taxon>
        <taxon>Caenorhabditis</taxon>
    </lineage>
</organism>
<proteinExistence type="inferred from homology"/>